<evidence type="ECO:0000305" key="1"/>
<name>FBD38_ARATH</name>
<gene>
    <name type="ordered locus">At5g56380</name>
    <name type="ORF">MCD7.14</name>
</gene>
<keyword id="KW-1185">Reference proteome</keyword>
<reference key="1">
    <citation type="journal article" date="1998" name="DNA Res.">
        <title>Structural analysis of Arabidopsis thaliana chromosome 5. IV. Sequence features of the regions of 1,456,315 bp covered by nineteen physically assigned P1 and TAC clones.</title>
        <authorList>
            <person name="Sato S."/>
            <person name="Kaneko T."/>
            <person name="Kotani H."/>
            <person name="Nakamura Y."/>
            <person name="Asamizu E."/>
            <person name="Miyajima N."/>
            <person name="Tabata S."/>
        </authorList>
    </citation>
    <scope>NUCLEOTIDE SEQUENCE [LARGE SCALE GENOMIC DNA]</scope>
    <source>
        <strain>cv. Columbia</strain>
    </source>
</reference>
<reference key="2">
    <citation type="journal article" date="2017" name="Plant J.">
        <title>Araport11: a complete reannotation of the Arabidopsis thaliana reference genome.</title>
        <authorList>
            <person name="Cheng C.Y."/>
            <person name="Krishnakumar V."/>
            <person name="Chan A.P."/>
            <person name="Thibaud-Nissen F."/>
            <person name="Schobel S."/>
            <person name="Town C.D."/>
        </authorList>
    </citation>
    <scope>GENOME REANNOTATION</scope>
    <source>
        <strain>cv. Columbia</strain>
    </source>
</reference>
<reference key="3">
    <citation type="journal article" date="2004" name="Genome Res.">
        <title>Whole genome sequence comparisons and 'full-length' cDNA sequences: a combined approach to evaluate and improve Arabidopsis genome annotation.</title>
        <authorList>
            <person name="Castelli V."/>
            <person name="Aury J.-M."/>
            <person name="Jaillon O."/>
            <person name="Wincker P."/>
            <person name="Clepet C."/>
            <person name="Menard M."/>
            <person name="Cruaud C."/>
            <person name="Quetier F."/>
            <person name="Scarpelli C."/>
            <person name="Schaechter V."/>
            <person name="Temple G."/>
            <person name="Caboche M."/>
            <person name="Weissenbach J."/>
            <person name="Salanoubat M."/>
        </authorList>
    </citation>
    <scope>NUCLEOTIDE SEQUENCE [LARGE SCALE MRNA]</scope>
    <source>
        <strain>cv. Columbia</strain>
    </source>
</reference>
<comment type="sequence caution" evidence="1">
    <conflict type="erroneous initiation">
        <sequence resource="EMBL-CDS" id="BAB11266"/>
    </conflict>
    <text>Truncated N-terminus.</text>
</comment>
<organism>
    <name type="scientific">Arabidopsis thaliana</name>
    <name type="common">Mouse-ear cress</name>
    <dbReference type="NCBI Taxonomy" id="3702"/>
    <lineage>
        <taxon>Eukaryota</taxon>
        <taxon>Viridiplantae</taxon>
        <taxon>Streptophyta</taxon>
        <taxon>Embryophyta</taxon>
        <taxon>Tracheophyta</taxon>
        <taxon>Spermatophyta</taxon>
        <taxon>Magnoliopsida</taxon>
        <taxon>eudicotyledons</taxon>
        <taxon>Gunneridae</taxon>
        <taxon>Pentapetalae</taxon>
        <taxon>rosids</taxon>
        <taxon>malvids</taxon>
        <taxon>Brassicales</taxon>
        <taxon>Brassicaceae</taxon>
        <taxon>Camelineae</taxon>
        <taxon>Arabidopsis</taxon>
    </lineage>
</organism>
<sequence>MDRISHLADEILSKILSFLGTKDVMQTMLLSKRFKSQWLLVPKLEFDDSTHLPETWGYQEPDYGNFRRFVDRSLLSREGRVLQTLFLKLGRQCSYDDIAIWVGIAVKRGLMELKLKYTDSYYPKRSSLPRSLYTCETLVVLKLKKGYLDVPDLVCLRSLKTLSLRDMNYSNASCLLRLLASCPVLEELFIQQGYYDSCALSFKIILPCLKKLSYLPKRKKKYSGIDRSEVSGGISGLVLDAPSLKYLHIVDRSGLFSVSEIININAVVKATLEVNASRPEKLLYSLVSVEHIRLCLSATEVVYPVGLGSSFHKLKRLEVCTCKSEWLDLFIHLLEDSPSLQDIKINQCHPVTNPRPQWNQPGSVPRCLSSSLETLEWVEYGGTHEEKELSTYLFKTAVCFKKASFTAKWSGGDANKKLQMLQELALSPRVSPTCELVFN</sequence>
<protein>
    <recommendedName>
        <fullName>FBD-associated F-box protein At5g56380</fullName>
    </recommendedName>
</protein>
<proteinExistence type="evidence at transcript level"/>
<dbReference type="EMBL" id="AB009049">
    <property type="protein sequence ID" value="BAB11266.1"/>
    <property type="status" value="ALT_INIT"/>
    <property type="molecule type" value="Genomic_DNA"/>
</dbReference>
<dbReference type="EMBL" id="CP002688">
    <property type="protein sequence ID" value="AED96758.1"/>
    <property type="molecule type" value="Genomic_DNA"/>
</dbReference>
<dbReference type="EMBL" id="CP002688">
    <property type="protein sequence ID" value="ANM71212.1"/>
    <property type="molecule type" value="Genomic_DNA"/>
</dbReference>
<dbReference type="EMBL" id="BX831314">
    <property type="status" value="NOT_ANNOTATED_CDS"/>
    <property type="molecule type" value="mRNA"/>
</dbReference>
<dbReference type="RefSeq" id="NP_001332756.1">
    <property type="nucleotide sequence ID" value="NM_001345198.1"/>
</dbReference>
<dbReference type="RefSeq" id="NP_200449.2">
    <property type="nucleotide sequence ID" value="NM_125021.4"/>
</dbReference>
<dbReference type="FunCoup" id="Q9FM93">
    <property type="interactions" value="171"/>
</dbReference>
<dbReference type="STRING" id="3702.Q9FM93"/>
<dbReference type="PaxDb" id="3702-AT5G56380.1"/>
<dbReference type="ProteomicsDB" id="222538"/>
<dbReference type="EnsemblPlants" id="AT5G56380.1">
    <property type="protein sequence ID" value="AT5G56380.1"/>
    <property type="gene ID" value="AT5G56380"/>
</dbReference>
<dbReference type="EnsemblPlants" id="AT5G56380.2">
    <property type="protein sequence ID" value="AT5G56380.2"/>
    <property type="gene ID" value="AT5G56380"/>
</dbReference>
<dbReference type="GeneID" id="835739"/>
<dbReference type="Gramene" id="AT5G56380.1">
    <property type="protein sequence ID" value="AT5G56380.1"/>
    <property type="gene ID" value="AT5G56380"/>
</dbReference>
<dbReference type="Gramene" id="AT5G56380.2">
    <property type="protein sequence ID" value="AT5G56380.2"/>
    <property type="gene ID" value="AT5G56380"/>
</dbReference>
<dbReference type="KEGG" id="ath:AT5G56380"/>
<dbReference type="Araport" id="AT5G56380"/>
<dbReference type="TAIR" id="AT5G56380"/>
<dbReference type="eggNOG" id="ENOG502R66V">
    <property type="taxonomic scope" value="Eukaryota"/>
</dbReference>
<dbReference type="HOGENOM" id="CLU_010721_1_2_1"/>
<dbReference type="InParanoid" id="Q9FM93"/>
<dbReference type="OMA" id="FLRIDEC"/>
<dbReference type="PhylomeDB" id="Q9FM93"/>
<dbReference type="PRO" id="PR:Q9FM93"/>
<dbReference type="Proteomes" id="UP000006548">
    <property type="component" value="Chromosome 5"/>
</dbReference>
<dbReference type="ExpressionAtlas" id="Q9FM93">
    <property type="expression patterns" value="baseline and differential"/>
</dbReference>
<dbReference type="Gene3D" id="1.20.1280.50">
    <property type="match status" value="1"/>
</dbReference>
<dbReference type="Gene3D" id="3.80.10.10">
    <property type="entry name" value="Ribonuclease Inhibitor"/>
    <property type="match status" value="1"/>
</dbReference>
<dbReference type="InterPro" id="IPR036047">
    <property type="entry name" value="F-box-like_dom_sf"/>
</dbReference>
<dbReference type="InterPro" id="IPR001810">
    <property type="entry name" value="F-box_dom"/>
</dbReference>
<dbReference type="InterPro" id="IPR006566">
    <property type="entry name" value="FBD"/>
</dbReference>
<dbReference type="InterPro" id="IPR050232">
    <property type="entry name" value="FBL13/AtMIF1-like"/>
</dbReference>
<dbReference type="InterPro" id="IPR032675">
    <property type="entry name" value="LRR_dom_sf"/>
</dbReference>
<dbReference type="InterPro" id="IPR055411">
    <property type="entry name" value="LRR_FXL15/At3g58940/PEG3-like"/>
</dbReference>
<dbReference type="PANTHER" id="PTHR31900">
    <property type="entry name" value="F-BOX/RNI SUPERFAMILY PROTEIN-RELATED"/>
    <property type="match status" value="1"/>
</dbReference>
<dbReference type="PANTHER" id="PTHR31900:SF29">
    <property type="entry name" value="FBD-LIKE DOMAIN FAMILY PROTEIN"/>
    <property type="match status" value="1"/>
</dbReference>
<dbReference type="Pfam" id="PF00646">
    <property type="entry name" value="F-box"/>
    <property type="match status" value="1"/>
</dbReference>
<dbReference type="Pfam" id="PF08387">
    <property type="entry name" value="FBD"/>
    <property type="match status" value="1"/>
</dbReference>
<dbReference type="Pfam" id="PF24758">
    <property type="entry name" value="LRR_At5g56370"/>
    <property type="match status" value="1"/>
</dbReference>
<dbReference type="SMART" id="SM00579">
    <property type="entry name" value="FBD"/>
    <property type="match status" value="1"/>
</dbReference>
<dbReference type="SUPFAM" id="SSF81383">
    <property type="entry name" value="F-box domain"/>
    <property type="match status" value="1"/>
</dbReference>
<dbReference type="SUPFAM" id="SSF52047">
    <property type="entry name" value="RNI-like"/>
    <property type="match status" value="1"/>
</dbReference>
<feature type="chain" id="PRO_0000396025" description="FBD-associated F-box protein At5g56380">
    <location>
        <begin position="1"/>
        <end position="439"/>
    </location>
</feature>
<feature type="domain" description="F-box">
    <location>
        <begin position="1"/>
        <end position="61"/>
    </location>
</feature>
<feature type="domain" description="FBD">
    <location>
        <begin position="358"/>
        <end position="406"/>
    </location>
</feature>
<feature type="sequence conflict" description="In Ref. 3; BX831314." evidence="1" ref="3">
    <original>I</original>
    <variation>V</variation>
    <location>
        <position position="4"/>
    </location>
</feature>
<feature type="sequence conflict" description="In Ref. 3; BX831314." evidence="1" ref="3">
    <original>K</original>
    <variation>R</variation>
    <location>
        <position position="22"/>
    </location>
</feature>
<accession>Q9FM93</accession>